<name>CYSZ_ECO7I</name>
<accession>B7NPU9</accession>
<comment type="function">
    <text evidence="1">High affinity, high specificity proton-dependent sulfate transporter, which mediates sulfate uptake. Provides the sulfur source for the cysteine synthesis pathway.</text>
</comment>
<comment type="subcellular location">
    <subcellularLocation>
        <location evidence="1">Cell inner membrane</location>
        <topology evidence="1">Multi-pass membrane protein</topology>
    </subcellularLocation>
</comment>
<comment type="similarity">
    <text evidence="1">Belongs to the CysZ family.</text>
</comment>
<keyword id="KW-0028">Amino-acid biosynthesis</keyword>
<keyword id="KW-0997">Cell inner membrane</keyword>
<keyword id="KW-1003">Cell membrane</keyword>
<keyword id="KW-0198">Cysteine biosynthesis</keyword>
<keyword id="KW-0472">Membrane</keyword>
<keyword id="KW-0764">Sulfate transport</keyword>
<keyword id="KW-0812">Transmembrane</keyword>
<keyword id="KW-1133">Transmembrane helix</keyword>
<keyword id="KW-0813">Transport</keyword>
<sequence>MVSSFTSAPRSGFYYFAQGWKLVSQPGIRRFVILPLLVNILLMGGAFWWLFTQLDVWIPTLMSYVPDWLQWLSYLLWPLAVISVLLVFGYFFSTIANWIAAPFNGLLAEQLEARLTGATPPDTGIFGIMKDVPRIMKREWQKFAWYLPRAIVLLILYFIPGIGQTVAPVLWFLFSAWMLAIQYCDYPFDNHKVPFKEMRIALRTRKITNMQFGALTSLFTMIPLLNLFIMPVAVCGATAMWVDCYRDKHAMWR</sequence>
<organism>
    <name type="scientific">Escherichia coli O7:K1 (strain IAI39 / ExPEC)</name>
    <dbReference type="NCBI Taxonomy" id="585057"/>
    <lineage>
        <taxon>Bacteria</taxon>
        <taxon>Pseudomonadati</taxon>
        <taxon>Pseudomonadota</taxon>
        <taxon>Gammaproteobacteria</taxon>
        <taxon>Enterobacterales</taxon>
        <taxon>Enterobacteriaceae</taxon>
        <taxon>Escherichia</taxon>
    </lineage>
</organism>
<gene>
    <name evidence="1" type="primary">cysZ</name>
    <name type="ordered locus">ECIAI39_2558</name>
</gene>
<reference key="1">
    <citation type="journal article" date="2009" name="PLoS Genet.">
        <title>Organised genome dynamics in the Escherichia coli species results in highly diverse adaptive paths.</title>
        <authorList>
            <person name="Touchon M."/>
            <person name="Hoede C."/>
            <person name="Tenaillon O."/>
            <person name="Barbe V."/>
            <person name="Baeriswyl S."/>
            <person name="Bidet P."/>
            <person name="Bingen E."/>
            <person name="Bonacorsi S."/>
            <person name="Bouchier C."/>
            <person name="Bouvet O."/>
            <person name="Calteau A."/>
            <person name="Chiapello H."/>
            <person name="Clermont O."/>
            <person name="Cruveiller S."/>
            <person name="Danchin A."/>
            <person name="Diard M."/>
            <person name="Dossat C."/>
            <person name="Karoui M.E."/>
            <person name="Frapy E."/>
            <person name="Garry L."/>
            <person name="Ghigo J.M."/>
            <person name="Gilles A.M."/>
            <person name="Johnson J."/>
            <person name="Le Bouguenec C."/>
            <person name="Lescat M."/>
            <person name="Mangenot S."/>
            <person name="Martinez-Jehanne V."/>
            <person name="Matic I."/>
            <person name="Nassif X."/>
            <person name="Oztas S."/>
            <person name="Petit M.A."/>
            <person name="Pichon C."/>
            <person name="Rouy Z."/>
            <person name="Ruf C.S."/>
            <person name="Schneider D."/>
            <person name="Tourret J."/>
            <person name="Vacherie B."/>
            <person name="Vallenet D."/>
            <person name="Medigue C."/>
            <person name="Rocha E.P.C."/>
            <person name="Denamur E."/>
        </authorList>
    </citation>
    <scope>NUCLEOTIDE SEQUENCE [LARGE SCALE GENOMIC DNA]</scope>
    <source>
        <strain>IAI39 / ExPEC</strain>
    </source>
</reference>
<evidence type="ECO:0000255" key="1">
    <source>
        <dbReference type="HAMAP-Rule" id="MF_00468"/>
    </source>
</evidence>
<protein>
    <recommendedName>
        <fullName evidence="1">Sulfate transporter CysZ</fullName>
    </recommendedName>
</protein>
<dbReference type="EMBL" id="CU928164">
    <property type="protein sequence ID" value="CAR18682.1"/>
    <property type="molecule type" value="Genomic_DNA"/>
</dbReference>
<dbReference type="RefSeq" id="WP_000254835.1">
    <property type="nucleotide sequence ID" value="NC_011750.1"/>
</dbReference>
<dbReference type="RefSeq" id="YP_002408508.1">
    <property type="nucleotide sequence ID" value="NC_011750.1"/>
</dbReference>
<dbReference type="SMR" id="B7NPU9"/>
<dbReference type="STRING" id="585057.ECIAI39_2558"/>
<dbReference type="KEGG" id="ect:ECIAI39_2558"/>
<dbReference type="PATRIC" id="fig|585057.6.peg.2665"/>
<dbReference type="HOGENOM" id="CLU_070331_1_0_6"/>
<dbReference type="Proteomes" id="UP000000749">
    <property type="component" value="Chromosome"/>
</dbReference>
<dbReference type="GO" id="GO:0005886">
    <property type="term" value="C:plasma membrane"/>
    <property type="evidence" value="ECO:0007669"/>
    <property type="project" value="UniProtKB-SubCell"/>
</dbReference>
<dbReference type="GO" id="GO:0009675">
    <property type="term" value="F:high-affinity sulfate:proton symporter activity"/>
    <property type="evidence" value="ECO:0007669"/>
    <property type="project" value="TreeGrafter"/>
</dbReference>
<dbReference type="GO" id="GO:0019344">
    <property type="term" value="P:cysteine biosynthetic process"/>
    <property type="evidence" value="ECO:0007669"/>
    <property type="project" value="UniProtKB-UniRule"/>
</dbReference>
<dbReference type="GO" id="GO:0000103">
    <property type="term" value="P:sulfate assimilation"/>
    <property type="evidence" value="ECO:0007669"/>
    <property type="project" value="InterPro"/>
</dbReference>
<dbReference type="HAMAP" id="MF_00468">
    <property type="entry name" value="CysZ"/>
    <property type="match status" value="1"/>
</dbReference>
<dbReference type="InterPro" id="IPR050480">
    <property type="entry name" value="CysZ_sulfate_transptr"/>
</dbReference>
<dbReference type="InterPro" id="IPR022985">
    <property type="entry name" value="Sulfate_CysZ"/>
</dbReference>
<dbReference type="NCBIfam" id="NF003433">
    <property type="entry name" value="PRK04949.1"/>
    <property type="match status" value="1"/>
</dbReference>
<dbReference type="PANTHER" id="PTHR37468">
    <property type="entry name" value="SULFATE TRANSPORTER CYSZ"/>
    <property type="match status" value="1"/>
</dbReference>
<dbReference type="PANTHER" id="PTHR37468:SF1">
    <property type="entry name" value="SULFATE TRANSPORTER CYSZ"/>
    <property type="match status" value="1"/>
</dbReference>
<dbReference type="Pfam" id="PF07264">
    <property type="entry name" value="EI24"/>
    <property type="match status" value="1"/>
</dbReference>
<proteinExistence type="inferred from homology"/>
<feature type="chain" id="PRO_1000125494" description="Sulfate transporter CysZ">
    <location>
        <begin position="1"/>
        <end position="253"/>
    </location>
</feature>
<feature type="transmembrane region" description="Helical" evidence="1">
    <location>
        <begin position="31"/>
        <end position="51"/>
    </location>
</feature>
<feature type="transmembrane region" description="Helical" evidence="1">
    <location>
        <begin position="75"/>
        <end position="95"/>
    </location>
</feature>
<feature type="transmembrane region" description="Helical" evidence="1">
    <location>
        <begin position="151"/>
        <end position="171"/>
    </location>
</feature>
<feature type="transmembrane region" description="Helical" evidence="1">
    <location>
        <begin position="222"/>
        <end position="242"/>
    </location>
</feature>